<dbReference type="EMBL" id="LK023120">
    <property type="protein sequence ID" value="VUC54477.1"/>
    <property type="molecule type" value="Genomic_DNA"/>
</dbReference>
<dbReference type="SMR" id="A0A509AFM3"/>
<dbReference type="STRING" id="5823.A0A509AFM3"/>
<dbReference type="VEuPathDB" id="PlasmoDB:PBANKA_0506500"/>
<dbReference type="InParanoid" id="A0A509AFM3"/>
<dbReference type="OMA" id="IFIECVA"/>
<dbReference type="Proteomes" id="UP000074855">
    <property type="component" value="Chromosome 5"/>
</dbReference>
<dbReference type="GO" id="GO:0005886">
    <property type="term" value="C:plasma membrane"/>
    <property type="evidence" value="ECO:0007669"/>
    <property type="project" value="UniProtKB-SubCell"/>
</dbReference>
<dbReference type="GO" id="GO:0005385">
    <property type="term" value="F:zinc ion transmembrane transporter activity"/>
    <property type="evidence" value="ECO:0007669"/>
    <property type="project" value="TreeGrafter"/>
</dbReference>
<dbReference type="GO" id="GO:0006826">
    <property type="term" value="P:iron ion transport"/>
    <property type="evidence" value="ECO:0007669"/>
    <property type="project" value="UniProtKB-KW"/>
</dbReference>
<dbReference type="InterPro" id="IPR003689">
    <property type="entry name" value="ZIP"/>
</dbReference>
<dbReference type="PANTHER" id="PTHR11040:SF198">
    <property type="entry name" value="METAL HOMEOSTASIS FACTOR ATX2"/>
    <property type="match status" value="1"/>
</dbReference>
<dbReference type="PANTHER" id="PTHR11040">
    <property type="entry name" value="ZINC/IRON TRANSPORTER"/>
    <property type="match status" value="1"/>
</dbReference>
<dbReference type="Pfam" id="PF02535">
    <property type="entry name" value="Zip"/>
    <property type="match status" value="1"/>
</dbReference>
<name>ZIPCO_PLABA</name>
<gene>
    <name evidence="3" type="primary">ZIPCO</name>
    <name evidence="5" type="ORF">PBANKA_0506500</name>
</gene>
<keyword id="KW-1003">Cell membrane</keyword>
<keyword id="KW-0406">Ion transport</keyword>
<keyword id="KW-0408">Iron</keyword>
<keyword id="KW-0410">Iron transport</keyword>
<keyword id="KW-0472">Membrane</keyword>
<keyword id="KW-1185">Reference proteome</keyword>
<keyword id="KW-0812">Transmembrane</keyword>
<keyword id="KW-1133">Transmembrane helix</keyword>
<keyword id="KW-0813">Transport</keyword>
<keyword id="KW-0862">Zinc</keyword>
<keyword id="KW-0864">Zinc transport</keyword>
<accession>A0A509AFM3</accession>
<organism evidence="6">
    <name type="scientific">Plasmodium berghei (strain Anka)</name>
    <dbReference type="NCBI Taxonomy" id="5823"/>
    <lineage>
        <taxon>Eukaryota</taxon>
        <taxon>Sar</taxon>
        <taxon>Alveolata</taxon>
        <taxon>Apicomplexa</taxon>
        <taxon>Aconoidasida</taxon>
        <taxon>Haemosporida</taxon>
        <taxon>Plasmodiidae</taxon>
        <taxon>Plasmodium</taxon>
        <taxon>Plasmodium (Vinckeia)</taxon>
    </lineage>
</organism>
<protein>
    <recommendedName>
        <fullName evidence="4">Putative metal ion transporter ZIPCO</fullName>
    </recommendedName>
    <alternativeName>
        <fullName evidence="3">ZIP domain-containing protein</fullName>
    </alternativeName>
</protein>
<proteinExistence type="evidence at protein level"/>
<comment type="function">
    <text evidence="2">Putative transporter for the divalent zinc and iron cations (PubMed:25257508). Required for the development of liver-stage parasites (PubMed:25257508).</text>
</comment>
<comment type="subcellular location">
    <subcellularLocation>
        <location evidence="2">Cell membrane</location>
        <topology evidence="1">Multi-pass membrane protein</topology>
    </subcellularLocation>
</comment>
<comment type="developmental stage">
    <text evidence="2">Highly expressed in liver stage parasites (at protein level) (PubMed:25257508). Not detected in sporozoites (at protein level) (PubMed:25257508).</text>
</comment>
<comment type="disruption phenotype">
    <text evidence="2">Gene disruption results in reduced sporozoite infectivity (PubMed:25257508). Reduced size of exoerythrocytic forms of parasites (PubMed:25257508). No significant effects on parasite growth during blood infection (PubMed:25257508). No significant effects on the numbers of salivary gland sporozoites during mosquito infection (PubMed:25257508).</text>
</comment>
<reference evidence="6" key="1">
    <citation type="journal article" date="2014" name="BMC Biol.">
        <title>A comprehensive evaluation of rodent malaria parasite genomes and gene expression.</title>
        <authorList>
            <person name="Otto T.D."/>
            <person name="Bohme U."/>
            <person name="Jackson A.P."/>
            <person name="Hunt M."/>
            <person name="Franke-Fayard B."/>
            <person name="Hoeijmakers W.A."/>
            <person name="Religa A.A."/>
            <person name="Robertson L."/>
            <person name="Sanders M."/>
            <person name="Ogun S.A."/>
            <person name="Cunningham D."/>
            <person name="Erhart A."/>
            <person name="Billker O."/>
            <person name="Khan S.M."/>
            <person name="Stunnenberg H.G."/>
            <person name="Langhorne J."/>
            <person name="Holder A.A."/>
            <person name="Waters A.P."/>
            <person name="Newbold C.I."/>
            <person name="Pain A."/>
            <person name="Berriman M."/>
            <person name="Janse C.J."/>
        </authorList>
    </citation>
    <scope>NUCLEOTIDE SEQUENCE [LARGE SCALE GENOMIC DNA]</scope>
    <source>
        <strain evidence="6">ANKA</strain>
    </source>
</reference>
<reference evidence="4" key="2">
    <citation type="journal article" date="2014" name="EMBO Mol. Med.">
        <title>ZIPCO, a putative metal ion transporter, is crucial for Plasmodium liver-stage development.</title>
        <authorList>
            <person name="Sahu T."/>
            <person name="Boisson B."/>
            <person name="Lacroix C."/>
            <person name="Bischoff E."/>
            <person name="Richier Q."/>
            <person name="Formaglio P."/>
            <person name="Thiberge S."/>
            <person name="Dobrescu I."/>
            <person name="Menard R."/>
            <person name="Baldacci P."/>
        </authorList>
    </citation>
    <scope>FUNCTION</scope>
    <scope>SUBCELLULAR LOCATION</scope>
    <scope>DEVELOPMENTAL STAGE</scope>
    <scope>DISRUPTION PHENOTYPE</scope>
</reference>
<feature type="chain" id="PRO_0000460275" description="Putative metal ion transporter ZIPCO">
    <location>
        <begin position="1"/>
        <end position="304"/>
    </location>
</feature>
<feature type="transmembrane region" description="Helical" evidence="1">
    <location>
        <begin position="1"/>
        <end position="21"/>
    </location>
</feature>
<feature type="transmembrane region" description="Helical" evidence="1">
    <location>
        <begin position="46"/>
        <end position="66"/>
    </location>
</feature>
<feature type="transmembrane region" description="Helical" evidence="1">
    <location>
        <begin position="74"/>
        <end position="94"/>
    </location>
</feature>
<feature type="transmembrane region" description="Helical" evidence="1">
    <location>
        <begin position="158"/>
        <end position="178"/>
    </location>
</feature>
<feature type="transmembrane region" description="Helical" evidence="1">
    <location>
        <begin position="183"/>
        <end position="203"/>
    </location>
</feature>
<feature type="transmembrane region" description="Helical" evidence="1">
    <location>
        <begin position="218"/>
        <end position="238"/>
    </location>
</feature>
<feature type="transmembrane region" description="Helical" evidence="1">
    <location>
        <begin position="243"/>
        <end position="263"/>
    </location>
</feature>
<feature type="transmembrane region" description="Helical" evidence="1">
    <location>
        <begin position="275"/>
        <end position="295"/>
    </location>
</feature>
<evidence type="ECO:0000255" key="1"/>
<evidence type="ECO:0000269" key="2">
    <source>
    </source>
</evidence>
<evidence type="ECO:0000303" key="3">
    <source>
    </source>
</evidence>
<evidence type="ECO:0000305" key="4"/>
<evidence type="ECO:0000312" key="5">
    <source>
        <dbReference type="EMBL" id="VUC54477.1"/>
    </source>
</evidence>
<evidence type="ECO:0000312" key="6">
    <source>
        <dbReference type="Proteomes" id="UP000074855"/>
    </source>
</evidence>
<sequence>MWLKLILAIVILIECIVVIYLPSHIESRIMNKKKHKIFNMENFENVASGAILALAFIHMLPEVIGLLNKNNLTIYCCFGLILISVTFLNITDILYDHHTENCSDIDNAEKNTNKFTINSASDKNIRDHIDIEMESLSIKENTNLSNNFIFDTFKSNAFFIVLSLFIHSFVEGLLIGSLKDKNPIIIVGLSMIAHKWAECLMIYKNAVKKTKDPILSSIYAWSFILSLPLGILVAVLSFSSNEFVEIIFSSIACGFFLYLSFNMTKDITVTKANKFYISFSYFFGVCGMSTLMIVFNYLEKSNVV</sequence>